<keyword id="KW-1043">Host membrane</keyword>
<keyword id="KW-0472">Membrane</keyword>
<keyword id="KW-1185">Reference proteome</keyword>
<keyword id="KW-0812">Transmembrane</keyword>
<keyword id="KW-1133">Transmembrane helix</keyword>
<accession>P38396</accession>
<accession>Q7PCF4</accession>
<dbReference type="EMBL" id="L18800">
    <property type="protein sequence ID" value="AAA72007.1"/>
    <property type="molecule type" value="Unassigned_DNA"/>
</dbReference>
<dbReference type="EMBL" id="AF217253">
    <property type="protein sequence ID" value="AAF75022.1"/>
    <property type="molecule type" value="Genomic_DNA"/>
</dbReference>
<dbReference type="EMBL" id="BK000583">
    <property type="protein sequence ID" value="DAA01019.1"/>
    <property type="molecule type" value="Genomic_DNA"/>
</dbReference>
<dbReference type="PIR" id="A40606">
    <property type="entry name" value="A40606"/>
</dbReference>
<dbReference type="RefSeq" id="NP_059604.1">
    <property type="nucleotide sequence ID" value="NC_002371.2"/>
</dbReference>
<dbReference type="SMR" id="P38396"/>
<dbReference type="GeneID" id="1262810"/>
<dbReference type="KEGG" id="vg:1262810"/>
<dbReference type="OrthoDB" id="9687at10239"/>
<dbReference type="Proteomes" id="UP000001795">
    <property type="component" value="Segment"/>
</dbReference>
<dbReference type="Proteomes" id="UP000007960">
    <property type="component" value="Segment"/>
</dbReference>
<dbReference type="GO" id="GO:0033644">
    <property type="term" value="C:host cell membrane"/>
    <property type="evidence" value="ECO:0007669"/>
    <property type="project" value="UniProtKB-SubCell"/>
</dbReference>
<dbReference type="GO" id="GO:0016020">
    <property type="term" value="C:membrane"/>
    <property type="evidence" value="ECO:0007669"/>
    <property type="project" value="UniProtKB-KW"/>
</dbReference>
<dbReference type="InterPro" id="IPR025982">
    <property type="entry name" value="SieB"/>
</dbReference>
<dbReference type="Pfam" id="PF14163">
    <property type="entry name" value="SieB"/>
    <property type="match status" value="1"/>
</dbReference>
<protein>
    <recommendedName>
        <fullName>Superinfection exclusion protein B</fullName>
    </recommendedName>
</protein>
<reference key="1">
    <citation type="journal article" date="1993" name="J. Bacteriol.">
        <title>Superinfection exclusion (sieB) genes of bacteriophages P22 and lambda.</title>
        <authorList>
            <person name="Ranade K."/>
            <person name="Poteete A.R."/>
        </authorList>
    </citation>
    <scope>NUCLEOTIDE SEQUENCE</scope>
</reference>
<reference key="2">
    <citation type="journal article" date="2000" name="J. Bacteriol.">
        <title>Sequence of the genome of Salmonella bacteriophage P22.</title>
        <authorList>
            <person name="Vander Byl C.S."/>
            <person name="Kropinski A.M.B."/>
        </authorList>
    </citation>
    <scope>NUCLEOTIDE SEQUENCE [LARGE SCALE GENOMIC DNA]</scope>
</reference>
<reference key="3">
    <citation type="journal article" date="2003" name="J. Bacteriol.">
        <title>Corrected sequence of the bacteriophage P22 genome.</title>
        <authorList>
            <person name="Pedulla M.L."/>
            <person name="Ford M.E."/>
            <person name="Karthikeyan T."/>
            <person name="Houtz J.M."/>
            <person name="Hendrix R.W."/>
            <person name="Hatfull G.F."/>
            <person name="Poteete A.R."/>
            <person name="Gilcrease E.B."/>
            <person name="Winn-Stapley D.A."/>
            <person name="Casjens S.R."/>
        </authorList>
    </citation>
    <scope>NUCLEOTIDE SEQUENCE [LARGE SCALE GENOMIC DNA]</scope>
</reference>
<organism>
    <name type="scientific">Salmonella phage P22</name>
    <name type="common">Bacteriophage P22</name>
    <dbReference type="NCBI Taxonomy" id="10754"/>
    <lineage>
        <taxon>Viruses</taxon>
        <taxon>Duplodnaviria</taxon>
        <taxon>Heunggongvirae</taxon>
        <taxon>Uroviricota</taxon>
        <taxon>Caudoviricetes</taxon>
        <taxon>Lederbergvirus</taxon>
    </lineage>
</organism>
<feature type="chain" id="PRO_0000077739" description="Superinfection exclusion protein B">
    <location>
        <begin position="1"/>
        <end position="192"/>
    </location>
</feature>
<feature type="transmembrane region" description="Helical" evidence="1">
    <location>
        <begin position="22"/>
        <end position="42"/>
    </location>
</feature>
<feature type="transmembrane region" description="Helical" evidence="1">
    <location>
        <begin position="51"/>
        <end position="71"/>
    </location>
</feature>
<sequence length="192" mass="22443">MNNSWWQELMRFFLQGMTLKQLIHMLIILIVLIIVMPVSVKEWINLHNPEILPHYWMYYILLFCVSYVLNGVVNSVYHAVTERIEASTAQRRKDREEKVVRDLFDSLTLGERAYLAFAVAANNQLKTEKGSPEAISLLKKGIITRLPSAIGYPDIDRFIIPEKYFNECYMRFAGKSDILMNELIVQDEQLKK</sequence>
<evidence type="ECO:0000255" key="1"/>
<evidence type="ECO:0000305" key="2"/>
<proteinExistence type="predicted"/>
<organismHost>
    <name type="scientific">Salmonella typhimurium</name>
    <dbReference type="NCBI Taxonomy" id="90371"/>
</organismHost>
<gene>
    <name type="primary">sieB</name>
    <name type="synonym">git</name>
</gene>
<name>SIEB_BPP22</name>
<comment type="function">
    <text>Has a role in the prevention of superinfection by phages that are insensitive to repression.</text>
</comment>
<comment type="subcellular location">
    <subcellularLocation>
        <location evidence="2">Host membrane</location>
        <topology evidence="2">Multi-pass membrane protein</topology>
    </subcellularLocation>
</comment>